<protein>
    <recommendedName>
        <fullName>Metallothionein</fullName>
    </recommendedName>
    <alternativeName>
        <fullName>AnMT</fullName>
        <shortName>MT</shortName>
    </alternativeName>
</protein>
<accession>O42152</accession>
<proteinExistence type="inferred from homology"/>
<name>MT_AMBME</name>
<feature type="chain" id="PRO_0000197320" description="Metallothionein">
    <location>
        <begin position="1"/>
        <end position="60"/>
    </location>
</feature>
<feature type="region of interest" description="Beta">
    <location>
        <begin position="1"/>
        <end position="28"/>
    </location>
</feature>
<feature type="region of interest" description="Alpha">
    <location>
        <begin position="29"/>
        <end position="60"/>
    </location>
</feature>
<feature type="binding site" evidence="2">
    <location>
        <position position="3"/>
    </location>
    <ligand>
        <name>a divalent metal cation</name>
        <dbReference type="ChEBI" id="CHEBI:60240"/>
        <label>1</label>
        <note>in cluster B</note>
    </ligand>
</feature>
<feature type="binding site" evidence="2">
    <location>
        <position position="5"/>
    </location>
    <ligand>
        <name>a divalent metal cation</name>
        <dbReference type="ChEBI" id="CHEBI:60240"/>
        <label>1</label>
        <note>in cluster B</note>
    </ligand>
</feature>
<feature type="binding site" evidence="2">
    <location>
        <position position="5"/>
    </location>
    <ligand>
        <name>a divalent metal cation</name>
        <dbReference type="ChEBI" id="CHEBI:60240"/>
        <label>2</label>
        <note>in cluster B</note>
    </ligand>
</feature>
<feature type="binding site" evidence="2">
    <location>
        <position position="11"/>
    </location>
    <ligand>
        <name>a divalent metal cation</name>
        <dbReference type="ChEBI" id="CHEBI:60240"/>
        <label>2</label>
        <note>in cluster B</note>
    </ligand>
</feature>
<feature type="binding site" evidence="2">
    <location>
        <position position="13"/>
    </location>
    <ligand>
        <name>a divalent metal cation</name>
        <dbReference type="ChEBI" id="CHEBI:60240"/>
        <label>2</label>
        <note>in cluster B</note>
    </ligand>
</feature>
<feature type="binding site" evidence="2">
    <location>
        <position position="13"/>
    </location>
    <ligand>
        <name>a divalent metal cation</name>
        <dbReference type="ChEBI" id="CHEBI:60240"/>
        <label>3</label>
        <note>in cluster B</note>
    </ligand>
</feature>
<feature type="binding site" evidence="2">
    <location>
        <position position="17"/>
    </location>
    <ligand>
        <name>a divalent metal cation</name>
        <dbReference type="ChEBI" id="CHEBI:60240"/>
        <label>3</label>
        <note>in cluster B</note>
    </ligand>
</feature>
<feature type="binding site" evidence="2">
    <location>
        <position position="19"/>
    </location>
    <ligand>
        <name>a divalent metal cation</name>
        <dbReference type="ChEBI" id="CHEBI:60240"/>
        <label>1</label>
        <note>in cluster B</note>
    </ligand>
</feature>
<feature type="binding site" evidence="2">
    <location>
        <position position="22"/>
    </location>
    <ligand>
        <name>a divalent metal cation</name>
        <dbReference type="ChEBI" id="CHEBI:60240"/>
        <label>1</label>
        <note>in cluster B</note>
    </ligand>
</feature>
<feature type="binding site" evidence="2">
    <location>
        <position position="22"/>
    </location>
    <ligand>
        <name>a divalent metal cation</name>
        <dbReference type="ChEBI" id="CHEBI:60240"/>
        <label>3</label>
        <note>in cluster B</note>
    </ligand>
</feature>
<feature type="binding site" evidence="2">
    <location>
        <position position="24"/>
    </location>
    <ligand>
        <name>a divalent metal cation</name>
        <dbReference type="ChEBI" id="CHEBI:60240"/>
        <label>2</label>
        <note>in cluster B</note>
    </ligand>
</feature>
<feature type="binding site" evidence="2">
    <location>
        <position position="27"/>
    </location>
    <ligand>
        <name>a divalent metal cation</name>
        <dbReference type="ChEBI" id="CHEBI:60240"/>
        <label>3</label>
        <note>in cluster B</note>
    </ligand>
</feature>
<feature type="binding site" evidence="2">
    <location>
        <position position="31"/>
    </location>
    <ligand>
        <name>a divalent metal cation</name>
        <dbReference type="ChEBI" id="CHEBI:60240"/>
        <label>4</label>
        <note>in cluster A</note>
    </ligand>
</feature>
<feature type="binding site" evidence="2">
    <location>
        <position position="32"/>
    </location>
    <ligand>
        <name>a divalent metal cation</name>
        <dbReference type="ChEBI" id="CHEBI:60240"/>
        <label>4</label>
        <note>in cluster A</note>
    </ligand>
</feature>
<feature type="binding site" evidence="2">
    <location>
        <position position="32"/>
    </location>
    <ligand>
        <name>a divalent metal cation</name>
        <dbReference type="ChEBI" id="CHEBI:60240"/>
        <label>5</label>
        <note>in cluster A</note>
    </ligand>
</feature>
<feature type="binding site" evidence="2">
    <location>
        <position position="34"/>
    </location>
    <ligand>
        <name>a divalent metal cation</name>
        <dbReference type="ChEBI" id="CHEBI:60240"/>
        <label>5</label>
        <note>in cluster A</note>
    </ligand>
</feature>
<feature type="binding site" evidence="2">
    <location>
        <position position="35"/>
    </location>
    <ligand>
        <name>a divalent metal cation</name>
        <dbReference type="ChEBI" id="CHEBI:60240"/>
        <label>5</label>
        <note>in cluster A</note>
    </ligand>
</feature>
<feature type="binding site" evidence="2">
    <location>
        <position position="35"/>
    </location>
    <ligand>
        <name>a divalent metal cation</name>
        <dbReference type="ChEBI" id="CHEBI:60240"/>
        <label>6</label>
        <note>in cluster A</note>
    </ligand>
</feature>
<feature type="binding site" evidence="2">
    <location>
        <position position="39"/>
    </location>
    <ligand>
        <name>a divalent metal cation</name>
        <dbReference type="ChEBI" id="CHEBI:60240"/>
        <label>6</label>
        <note>in cluster A</note>
    </ligand>
</feature>
<feature type="binding site" evidence="2">
    <location>
        <position position="42"/>
    </location>
    <ligand>
        <name>a divalent metal cation</name>
        <dbReference type="ChEBI" id="CHEBI:60240"/>
        <label>4</label>
        <note>in cluster A</note>
    </ligand>
</feature>
<feature type="binding site" evidence="2">
    <location>
        <position position="42"/>
    </location>
    <ligand>
        <name>a divalent metal cation</name>
        <dbReference type="ChEBI" id="CHEBI:60240"/>
        <label>6</label>
        <note>in cluster A</note>
    </ligand>
</feature>
<feature type="binding site" evidence="2">
    <location>
        <position position="46"/>
    </location>
    <ligand>
        <name>a divalent metal cation</name>
        <dbReference type="ChEBI" id="CHEBI:60240"/>
        <label>4</label>
        <note>in cluster A</note>
    </ligand>
</feature>
<feature type="binding site" evidence="2">
    <location>
        <position position="48"/>
    </location>
    <ligand>
        <name>a divalent metal cation</name>
        <dbReference type="ChEBI" id="CHEBI:60240"/>
        <label>5</label>
        <note>in cluster A</note>
    </ligand>
</feature>
<feature type="binding site" evidence="2">
    <location>
        <position position="48"/>
    </location>
    <ligand>
        <name>a divalent metal cation</name>
        <dbReference type="ChEBI" id="CHEBI:60240"/>
        <label>7</label>
        <note>in cluster A</note>
    </ligand>
</feature>
<feature type="binding site" evidence="2">
    <location>
        <position position="56"/>
    </location>
    <ligand>
        <name>a divalent metal cation</name>
        <dbReference type="ChEBI" id="CHEBI:60240"/>
        <label>7</label>
        <note>in cluster A</note>
    </ligand>
</feature>
<feature type="binding site" evidence="2">
    <location>
        <position position="58"/>
    </location>
    <ligand>
        <name>a divalent metal cation</name>
        <dbReference type="ChEBI" id="CHEBI:60240"/>
        <label>7</label>
        <note>in cluster A</note>
    </ligand>
</feature>
<feature type="binding site" evidence="2">
    <location>
        <position position="59"/>
    </location>
    <ligand>
        <name>a divalent metal cation</name>
        <dbReference type="ChEBI" id="CHEBI:60240"/>
        <label>6</label>
        <note>in cluster A</note>
    </ligand>
</feature>
<feature type="binding site" evidence="2">
    <location>
        <position position="59"/>
    </location>
    <ligand>
        <name>a divalent metal cation</name>
        <dbReference type="ChEBI" id="CHEBI:60240"/>
        <label>7</label>
        <note>in cluster A</note>
    </ligand>
</feature>
<dbReference type="EMBL" id="AF008583">
    <property type="protein sequence ID" value="AAB71835.1"/>
    <property type="molecule type" value="mRNA"/>
</dbReference>
<dbReference type="SMR" id="O42152"/>
<dbReference type="GO" id="GO:0005737">
    <property type="term" value="C:cytoplasm"/>
    <property type="evidence" value="ECO:0007669"/>
    <property type="project" value="TreeGrafter"/>
</dbReference>
<dbReference type="GO" id="GO:0005634">
    <property type="term" value="C:nucleus"/>
    <property type="evidence" value="ECO:0007669"/>
    <property type="project" value="TreeGrafter"/>
</dbReference>
<dbReference type="GO" id="GO:0046872">
    <property type="term" value="F:metal ion binding"/>
    <property type="evidence" value="ECO:0007669"/>
    <property type="project" value="UniProtKB-KW"/>
</dbReference>
<dbReference type="GO" id="GO:0071276">
    <property type="term" value="P:cellular response to cadmium ion"/>
    <property type="evidence" value="ECO:0007669"/>
    <property type="project" value="TreeGrafter"/>
</dbReference>
<dbReference type="GO" id="GO:0071280">
    <property type="term" value="P:cellular response to copper ion"/>
    <property type="evidence" value="ECO:0007669"/>
    <property type="project" value="TreeGrafter"/>
</dbReference>
<dbReference type="GO" id="GO:0071294">
    <property type="term" value="P:cellular response to zinc ion"/>
    <property type="evidence" value="ECO:0007669"/>
    <property type="project" value="TreeGrafter"/>
</dbReference>
<dbReference type="GO" id="GO:0010273">
    <property type="term" value="P:detoxification of copper ion"/>
    <property type="evidence" value="ECO:0007669"/>
    <property type="project" value="TreeGrafter"/>
</dbReference>
<dbReference type="GO" id="GO:0006882">
    <property type="term" value="P:intracellular zinc ion homeostasis"/>
    <property type="evidence" value="ECO:0007669"/>
    <property type="project" value="TreeGrafter"/>
</dbReference>
<dbReference type="FunFam" id="4.10.10.10:FF:000001">
    <property type="entry name" value="Metallothionein"/>
    <property type="match status" value="1"/>
</dbReference>
<dbReference type="Gene3D" id="4.10.10.10">
    <property type="entry name" value="Metallothionein Isoform II"/>
    <property type="match status" value="1"/>
</dbReference>
<dbReference type="InterPro" id="IPR017854">
    <property type="entry name" value="Metalthion_dom_sf"/>
</dbReference>
<dbReference type="InterPro" id="IPR023587">
    <property type="entry name" value="Metalthion_dom_sf_vert"/>
</dbReference>
<dbReference type="InterPro" id="IPR000006">
    <property type="entry name" value="Metalthion_vert"/>
</dbReference>
<dbReference type="InterPro" id="IPR018064">
    <property type="entry name" value="Metalthion_vert_metal_BS"/>
</dbReference>
<dbReference type="PANTHER" id="PTHR23299">
    <property type="entry name" value="METALLOTHIONEIN"/>
    <property type="match status" value="1"/>
</dbReference>
<dbReference type="PANTHER" id="PTHR23299:SF55">
    <property type="entry name" value="METALLOTHIONEIN-1F"/>
    <property type="match status" value="1"/>
</dbReference>
<dbReference type="Pfam" id="PF00131">
    <property type="entry name" value="Metallothio"/>
    <property type="match status" value="1"/>
</dbReference>
<dbReference type="PRINTS" id="PR00860">
    <property type="entry name" value="MTVERTEBRATE"/>
</dbReference>
<dbReference type="SUPFAM" id="SSF57868">
    <property type="entry name" value="Metallothionein"/>
    <property type="match status" value="1"/>
</dbReference>
<dbReference type="PROSITE" id="PS00203">
    <property type="entry name" value="METALLOTHIONEIN_VRT"/>
    <property type="match status" value="1"/>
</dbReference>
<evidence type="ECO:0000250" key="1"/>
<evidence type="ECO:0000250" key="2">
    <source>
        <dbReference type="UniProtKB" id="P02795"/>
    </source>
</evidence>
<evidence type="ECO:0000305" key="3"/>
<organism>
    <name type="scientific">Ambystoma mexicanum</name>
    <name type="common">Axolotl</name>
    <dbReference type="NCBI Taxonomy" id="8296"/>
    <lineage>
        <taxon>Eukaryota</taxon>
        <taxon>Metazoa</taxon>
        <taxon>Chordata</taxon>
        <taxon>Craniata</taxon>
        <taxon>Vertebrata</taxon>
        <taxon>Euteleostomi</taxon>
        <taxon>Amphibia</taxon>
        <taxon>Batrachia</taxon>
        <taxon>Caudata</taxon>
        <taxon>Salamandroidea</taxon>
        <taxon>Ambystomatidae</taxon>
        <taxon>Ambystoma</taxon>
    </lineage>
</organism>
<reference key="1">
    <citation type="journal article" date="1998" name="DNA Cell Biol.">
        <title>Cloning of a complementary DNA encoding an Ambystoma mexicanum metallothionein, AmMT, and expression of the gene during early development.</title>
        <authorList>
            <person name="Saint-Jacques E."/>
            <person name="Guay J."/>
            <person name="Wirtanen L."/>
            <person name="Huard V."/>
            <person name="Stewart G."/>
            <person name="Seguin C."/>
        </authorList>
    </citation>
    <scope>NUCLEOTIDE SEQUENCE [MRNA]</scope>
    <source>
        <tissue>Embryo</tissue>
    </source>
</reference>
<keyword id="KW-0479">Metal-binding</keyword>
<keyword id="KW-0480">Metal-thiolate cluster</keyword>
<sequence>MDCACATGGSCSCAGSCKCENCKCTSCKKSCCSCCPSECEKCGQGCVCKGGSSEKCSCCN</sequence>
<comment type="function">
    <text evidence="1">Metallothioneins have a high content of cysteine residues that bind various heavy metals.</text>
</comment>
<comment type="domain">
    <text>Class I metallothioneins contain 2 metal-binding domains: four divalent ions are chelated within cluster A of the alpha domain and are coordinated via cysteinyl thiolate bridges to 11 cysteine ligands. Cluster B, the corresponding region within the beta domain, can ligate three divalent ions to 9 cysteines.</text>
</comment>
<comment type="similarity">
    <text evidence="3">Belongs to the metallothionein superfamily. Type 1 family.</text>
</comment>
<gene>
    <name type="primary">MT-A</name>
</gene>